<dbReference type="EMBL" id="CP000948">
    <property type="protein sequence ID" value="ACB03668.1"/>
    <property type="molecule type" value="Genomic_DNA"/>
</dbReference>
<dbReference type="RefSeq" id="WP_001090866.1">
    <property type="nucleotide sequence ID" value="NC_010473.1"/>
</dbReference>
<dbReference type="SMR" id="B1XAZ1"/>
<dbReference type="DNASU" id="6060342"/>
<dbReference type="KEGG" id="ecd:ECDH10B_2682"/>
<dbReference type="HOGENOM" id="CLU_047530_3_1_6"/>
<dbReference type="GO" id="GO:0005886">
    <property type="term" value="C:plasma membrane"/>
    <property type="evidence" value="ECO:0007669"/>
    <property type="project" value="UniProtKB-SubCell"/>
</dbReference>
<dbReference type="GO" id="GO:0003677">
    <property type="term" value="F:DNA binding"/>
    <property type="evidence" value="ECO:0007669"/>
    <property type="project" value="UniProtKB-KW"/>
</dbReference>
<dbReference type="GO" id="GO:0008360">
    <property type="term" value="P:regulation of cell shape"/>
    <property type="evidence" value="ECO:0007669"/>
    <property type="project" value="UniProtKB-UniRule"/>
</dbReference>
<dbReference type="CDD" id="cd00093">
    <property type="entry name" value="HTH_XRE"/>
    <property type="match status" value="1"/>
</dbReference>
<dbReference type="FunFam" id="1.10.260.40:FF:000014">
    <property type="entry name" value="Cytoskeleton protein RodZ"/>
    <property type="match status" value="1"/>
</dbReference>
<dbReference type="Gene3D" id="1.10.260.40">
    <property type="entry name" value="lambda repressor-like DNA-binding domains"/>
    <property type="match status" value="1"/>
</dbReference>
<dbReference type="HAMAP" id="MF_02017">
    <property type="entry name" value="RodZ"/>
    <property type="match status" value="1"/>
</dbReference>
<dbReference type="InterPro" id="IPR050400">
    <property type="entry name" value="Bact_Cytoskel_RodZ"/>
</dbReference>
<dbReference type="InterPro" id="IPR001387">
    <property type="entry name" value="Cro/C1-type_HTH"/>
</dbReference>
<dbReference type="InterPro" id="IPR010982">
    <property type="entry name" value="Lambda_DNA-bd_dom_sf"/>
</dbReference>
<dbReference type="InterPro" id="IPR023690">
    <property type="entry name" value="RodZ"/>
</dbReference>
<dbReference type="InterPro" id="IPR025194">
    <property type="entry name" value="RodZ-like_C"/>
</dbReference>
<dbReference type="NCBIfam" id="NF008109">
    <property type="entry name" value="PRK10856.1"/>
    <property type="match status" value="1"/>
</dbReference>
<dbReference type="PANTHER" id="PTHR34475">
    <property type="match status" value="1"/>
</dbReference>
<dbReference type="PANTHER" id="PTHR34475:SF1">
    <property type="entry name" value="CYTOSKELETON PROTEIN RODZ"/>
    <property type="match status" value="1"/>
</dbReference>
<dbReference type="Pfam" id="PF13413">
    <property type="entry name" value="HTH_25"/>
    <property type="match status" value="1"/>
</dbReference>
<dbReference type="Pfam" id="PF13464">
    <property type="entry name" value="RodZ_C"/>
    <property type="match status" value="1"/>
</dbReference>
<dbReference type="SMART" id="SM00530">
    <property type="entry name" value="HTH_XRE"/>
    <property type="match status" value="1"/>
</dbReference>
<dbReference type="SUPFAM" id="SSF47413">
    <property type="entry name" value="lambda repressor-like DNA-binding domains"/>
    <property type="match status" value="1"/>
</dbReference>
<dbReference type="PROSITE" id="PS50943">
    <property type="entry name" value="HTH_CROC1"/>
    <property type="match status" value="1"/>
</dbReference>
<organism>
    <name type="scientific">Escherichia coli (strain K12 / DH10B)</name>
    <dbReference type="NCBI Taxonomy" id="316385"/>
    <lineage>
        <taxon>Bacteria</taxon>
        <taxon>Pseudomonadati</taxon>
        <taxon>Pseudomonadota</taxon>
        <taxon>Gammaproteobacteria</taxon>
        <taxon>Enterobacterales</taxon>
        <taxon>Enterobacteriaceae</taxon>
        <taxon>Escherichia</taxon>
    </lineage>
</organism>
<accession>B1XAZ1</accession>
<proteinExistence type="inferred from homology"/>
<evidence type="ECO:0000255" key="1">
    <source>
        <dbReference type="HAMAP-Rule" id="MF_02017"/>
    </source>
</evidence>
<evidence type="ECO:0000256" key="2">
    <source>
        <dbReference type="SAM" id="MobiDB-lite"/>
    </source>
</evidence>
<comment type="function">
    <text evidence="1">Cytoskeletal protein that is involved in cell-shape control through regulation of the length of the long axis.</text>
</comment>
<comment type="subcellular location">
    <subcellularLocation>
        <location evidence="1">Cell inner membrane</location>
        <topology evidence="1">Single-pass type II membrane protein</topology>
    </subcellularLocation>
    <text evidence="1">Forms helical filaments along the long axis of the cell.</text>
</comment>
<comment type="domain">
    <text evidence="1">The helix-turn-helix (HTH) motif in the cytoplasmic domain of the N-terminus is involved in the formation of spirals to maintain the rigid rod shape. As this protein is anchored in the cytoplasmic membrane, the HTH motif may contribute to protein-protein interactions to form the RodZ helix, which is localized beneath the cytoplasmic membrane. The C-terminal domain may be critical for determination of the rod shape by probably interacting with enzymes required for synthesis of the peptidoglycan layer, including PBPs in the periplasm.</text>
</comment>
<comment type="similarity">
    <text evidence="1">Belongs to the RodZ family.</text>
</comment>
<protein>
    <recommendedName>
        <fullName evidence="1">Cytoskeleton protein RodZ</fullName>
    </recommendedName>
</protein>
<keyword id="KW-0997">Cell inner membrane</keyword>
<keyword id="KW-1003">Cell membrane</keyword>
<keyword id="KW-0133">Cell shape</keyword>
<keyword id="KW-0238">DNA-binding</keyword>
<keyword id="KW-0472">Membrane</keyword>
<keyword id="KW-0735">Signal-anchor</keyword>
<keyword id="KW-0812">Transmembrane</keyword>
<keyword id="KW-1133">Transmembrane helix</keyword>
<gene>
    <name evidence="1" type="primary">rodZ</name>
    <name type="ordered locus">ECDH10B_2682</name>
</gene>
<name>RODZ_ECODH</name>
<reference key="1">
    <citation type="journal article" date="2008" name="J. Bacteriol.">
        <title>The complete genome sequence of Escherichia coli DH10B: insights into the biology of a laboratory workhorse.</title>
        <authorList>
            <person name="Durfee T."/>
            <person name="Nelson R."/>
            <person name="Baldwin S."/>
            <person name="Plunkett G. III"/>
            <person name="Burland V."/>
            <person name="Mau B."/>
            <person name="Petrosino J.F."/>
            <person name="Qin X."/>
            <person name="Muzny D.M."/>
            <person name="Ayele M."/>
            <person name="Gibbs R.A."/>
            <person name="Csorgo B."/>
            <person name="Posfai G."/>
            <person name="Weinstock G.M."/>
            <person name="Blattner F.R."/>
        </authorList>
    </citation>
    <scope>NUCLEOTIDE SEQUENCE [LARGE SCALE GENOMIC DNA]</scope>
    <source>
        <strain>K12 / DH10B</strain>
    </source>
</reference>
<sequence>MNTEATHDQNEALTTGARLRNAREQLGLSQQAVAERLCLKVSTVRDIEEDKAPADLASTFLRGYIRSYARLVHIPEEELLPGLEKQAPLRAAKVAPMQSFSLGKRRKKRDGWLMTFTWLVLFVVIGLSGAWWWQDRKAQQEEITTMADQSSAELSSNSEQGQSVPLNTSTTTDPATTSTPPASVDTTATNTQTPAVTAPAPAVDPQQNAVVSPSQANVDTAATPAPTAATTPDGAAPLPTDQAGVTTPVADPNALVMNFTADCWLEVTDATGKKLFSGMQRKDGNLNLTGQAPYKLKIGAPAAVQIQYQGKPVDLSRFIRTNQVARLTLNAEQSPAQ</sequence>
<feature type="chain" id="PRO_0000361835" description="Cytoskeleton protein RodZ">
    <location>
        <begin position="1"/>
        <end position="337"/>
    </location>
</feature>
<feature type="topological domain" description="Cytoplasmic" evidence="1">
    <location>
        <begin position="1"/>
        <end position="111"/>
    </location>
</feature>
<feature type="transmembrane region" description="Helical; Signal-anchor for type II membrane protein" evidence="1">
    <location>
        <begin position="112"/>
        <end position="132"/>
    </location>
</feature>
<feature type="topological domain" description="Periplasmic" evidence="1">
    <location>
        <begin position="133"/>
        <end position="337"/>
    </location>
</feature>
<feature type="domain" description="HTH cro/C1-type" evidence="1">
    <location>
        <begin position="19"/>
        <end position="71"/>
    </location>
</feature>
<feature type="DNA-binding region" description="H-T-H motif" evidence="1">
    <location>
        <begin position="30"/>
        <end position="49"/>
    </location>
</feature>
<feature type="region of interest" description="Disordered" evidence="2">
    <location>
        <begin position="144"/>
        <end position="235"/>
    </location>
</feature>
<feature type="compositionally biased region" description="Polar residues" evidence="2">
    <location>
        <begin position="144"/>
        <end position="167"/>
    </location>
</feature>
<feature type="compositionally biased region" description="Low complexity" evidence="2">
    <location>
        <begin position="168"/>
        <end position="207"/>
    </location>
</feature>
<feature type="compositionally biased region" description="Polar residues" evidence="2">
    <location>
        <begin position="208"/>
        <end position="218"/>
    </location>
</feature>
<feature type="compositionally biased region" description="Low complexity" evidence="2">
    <location>
        <begin position="219"/>
        <end position="235"/>
    </location>
</feature>